<name>LNT2_TREPA</name>
<keyword id="KW-0012">Acyltransferase</keyword>
<keyword id="KW-0997">Cell inner membrane</keyword>
<keyword id="KW-1003">Cell membrane</keyword>
<keyword id="KW-0472">Membrane</keyword>
<keyword id="KW-1185">Reference proteome</keyword>
<keyword id="KW-0808">Transferase</keyword>
<keyword id="KW-0812">Transmembrane</keyword>
<keyword id="KW-1133">Transmembrane helix</keyword>
<feature type="chain" id="PRO_0000178106" description="Apolipoprotein N-acyltransferase 2">
    <location>
        <begin position="1"/>
        <end position="559"/>
    </location>
</feature>
<feature type="transmembrane region" description="Helical" evidence="1">
    <location>
        <begin position="27"/>
        <end position="47"/>
    </location>
</feature>
<feature type="transmembrane region" description="Helical" evidence="1">
    <location>
        <begin position="53"/>
        <end position="73"/>
    </location>
</feature>
<feature type="transmembrane region" description="Helical" evidence="1">
    <location>
        <begin position="86"/>
        <end position="106"/>
    </location>
</feature>
<feature type="transmembrane region" description="Helical" evidence="1">
    <location>
        <begin position="114"/>
        <end position="134"/>
    </location>
</feature>
<feature type="transmembrane region" description="Helical" evidence="1">
    <location>
        <begin position="153"/>
        <end position="173"/>
    </location>
</feature>
<feature type="transmembrane region" description="Helical" evidence="1">
    <location>
        <begin position="187"/>
        <end position="207"/>
    </location>
</feature>
<feature type="transmembrane region" description="Helical" evidence="1">
    <location>
        <begin position="519"/>
        <end position="539"/>
    </location>
</feature>
<feature type="domain" description="CN hydrolase" evidence="1">
    <location>
        <begin position="221"/>
        <end position="507"/>
    </location>
</feature>
<feature type="active site" description="Proton acceptor" evidence="1">
    <location>
        <position position="288"/>
    </location>
</feature>
<feature type="active site" evidence="1">
    <location>
        <position position="358"/>
    </location>
</feature>
<feature type="active site" description="Nucleophile" evidence="1">
    <location>
        <position position="416"/>
    </location>
</feature>
<proteinExistence type="inferred from homology"/>
<evidence type="ECO:0000255" key="1">
    <source>
        <dbReference type="HAMAP-Rule" id="MF_01148"/>
    </source>
</evidence>
<sequence length="559" mass="61262">MLCTAPLVSSAASAVLLAFAIPNEFWLAGSSVLGLGALVPLYVGFLLSPAKKHVACSYGLFVALVHACSSFWLKNFQGFALFTLGASTVGYFFYALPFGVAFACILRKQAPARACAFALVWTLWEWVKSTGILAYPWGTVPMTAHSLSHLIQIADITGVWGLSFLIPLANACVAESLHFFIKKRDSVPVFRLWLLTGCLYCLCSLYGAYRIATLGAPRTTLALAIVQQNADPWDTXSFEKNLTTAIHLTETALRTQTAPPLPTTPYRKEKTLTHASARAPVDMVVWSESSLRYPYEQYRHVYNALPAARPFSAFLRTLGAPLLVGTPLRLSGNSTKGGYANAVALLRPDGHVAQVYGKMQMVPFAEFIPWGHMTSVQRLAQMLAGFSESWTPGPGPRLFHVPCAAGGSVRFATPICYEDAFPSLCAALHTQGSELLINLTNDSWSKTASAEWQHYVVSLFRAIELRTTLVRSTNSGYTVVIGPEGKTRAAFPLFQATSAVLHVPVYPVVRTYYARMRDWVIVLCALIFFAEGVRMAVHTRRHSTTQAESSLQQIRGEHV</sequence>
<accession>O83432</accession>
<organism>
    <name type="scientific">Treponema pallidum (strain Nichols)</name>
    <dbReference type="NCBI Taxonomy" id="243276"/>
    <lineage>
        <taxon>Bacteria</taxon>
        <taxon>Pseudomonadati</taxon>
        <taxon>Spirochaetota</taxon>
        <taxon>Spirochaetia</taxon>
        <taxon>Spirochaetales</taxon>
        <taxon>Treponemataceae</taxon>
        <taxon>Treponema</taxon>
    </lineage>
</organism>
<dbReference type="EC" id="2.3.1.269" evidence="1"/>
<dbReference type="EMBL" id="AE000520">
    <property type="protein sequence ID" value="AAC65404.1"/>
    <property type="molecule type" value="Genomic_DNA"/>
</dbReference>
<dbReference type="PIR" id="G71327">
    <property type="entry name" value="G71327"/>
</dbReference>
<dbReference type="RefSeq" id="WP_010881865.1">
    <property type="nucleotide sequence ID" value="NC_000919.1"/>
</dbReference>
<dbReference type="STRING" id="243276.TP_0417"/>
<dbReference type="EnsemblBacteria" id="AAC65404">
    <property type="protein sequence ID" value="AAC65404"/>
    <property type="gene ID" value="TP_0417"/>
</dbReference>
<dbReference type="KEGG" id="tpa:TP_0417"/>
<dbReference type="eggNOG" id="COG0815">
    <property type="taxonomic scope" value="Bacteria"/>
</dbReference>
<dbReference type="HOGENOM" id="CLU_019563_1_1_12"/>
<dbReference type="OrthoDB" id="9811121at2"/>
<dbReference type="UniPathway" id="UPA00666"/>
<dbReference type="Proteomes" id="UP000000811">
    <property type="component" value="Chromosome"/>
</dbReference>
<dbReference type="GO" id="GO:0005886">
    <property type="term" value="C:plasma membrane"/>
    <property type="evidence" value="ECO:0007669"/>
    <property type="project" value="UniProtKB-SubCell"/>
</dbReference>
<dbReference type="GO" id="GO:0016410">
    <property type="term" value="F:N-acyltransferase activity"/>
    <property type="evidence" value="ECO:0007669"/>
    <property type="project" value="UniProtKB-UniRule"/>
</dbReference>
<dbReference type="GO" id="GO:0042158">
    <property type="term" value="P:lipoprotein biosynthetic process"/>
    <property type="evidence" value="ECO:0007669"/>
    <property type="project" value="UniProtKB-UniRule"/>
</dbReference>
<dbReference type="CDD" id="cd07571">
    <property type="entry name" value="ALP_N-acyl_transferase"/>
    <property type="match status" value="1"/>
</dbReference>
<dbReference type="Gene3D" id="3.60.110.10">
    <property type="entry name" value="Carbon-nitrogen hydrolase"/>
    <property type="match status" value="1"/>
</dbReference>
<dbReference type="HAMAP" id="MF_01148">
    <property type="entry name" value="Lnt"/>
    <property type="match status" value="1"/>
</dbReference>
<dbReference type="InterPro" id="IPR004563">
    <property type="entry name" value="Apolipo_AcylTrfase"/>
</dbReference>
<dbReference type="InterPro" id="IPR003010">
    <property type="entry name" value="C-N_Hydrolase"/>
</dbReference>
<dbReference type="InterPro" id="IPR036526">
    <property type="entry name" value="C-N_Hydrolase_sf"/>
</dbReference>
<dbReference type="InterPro" id="IPR045378">
    <property type="entry name" value="LNT_N"/>
</dbReference>
<dbReference type="NCBIfam" id="TIGR00546">
    <property type="entry name" value="lnt"/>
    <property type="match status" value="1"/>
</dbReference>
<dbReference type="PANTHER" id="PTHR38686">
    <property type="entry name" value="APOLIPOPROTEIN N-ACYLTRANSFERASE"/>
    <property type="match status" value="1"/>
</dbReference>
<dbReference type="PANTHER" id="PTHR38686:SF1">
    <property type="entry name" value="APOLIPOPROTEIN N-ACYLTRANSFERASE"/>
    <property type="match status" value="1"/>
</dbReference>
<dbReference type="Pfam" id="PF00795">
    <property type="entry name" value="CN_hydrolase"/>
    <property type="match status" value="1"/>
</dbReference>
<dbReference type="Pfam" id="PF20154">
    <property type="entry name" value="LNT_N"/>
    <property type="match status" value="1"/>
</dbReference>
<dbReference type="SUPFAM" id="SSF56317">
    <property type="entry name" value="Carbon-nitrogen hydrolase"/>
    <property type="match status" value="1"/>
</dbReference>
<dbReference type="PROSITE" id="PS50263">
    <property type="entry name" value="CN_HYDROLASE"/>
    <property type="match status" value="1"/>
</dbReference>
<comment type="function">
    <text evidence="1">Catalyzes the phospholipid dependent N-acylation of the N-terminal cysteine of apolipoprotein, the last step in lipoprotein maturation.</text>
</comment>
<comment type="catalytic activity">
    <reaction evidence="1">
        <text>N-terminal S-1,2-diacyl-sn-glyceryl-L-cysteinyl-[lipoprotein] + a glycerophospholipid = N-acyl-S-1,2-diacyl-sn-glyceryl-L-cysteinyl-[lipoprotein] + a 2-acyl-sn-glycero-3-phospholipid + H(+)</text>
        <dbReference type="Rhea" id="RHEA:48228"/>
        <dbReference type="Rhea" id="RHEA-COMP:14681"/>
        <dbReference type="Rhea" id="RHEA-COMP:14684"/>
        <dbReference type="ChEBI" id="CHEBI:15378"/>
        <dbReference type="ChEBI" id="CHEBI:136912"/>
        <dbReference type="ChEBI" id="CHEBI:140656"/>
        <dbReference type="ChEBI" id="CHEBI:140657"/>
        <dbReference type="ChEBI" id="CHEBI:140660"/>
        <dbReference type="EC" id="2.3.1.269"/>
    </reaction>
</comment>
<comment type="pathway">
    <text evidence="1">Protein modification; lipoprotein biosynthesis (N-acyl transfer).</text>
</comment>
<comment type="subcellular location">
    <subcellularLocation>
        <location evidence="1">Cell inner membrane</location>
        <topology evidence="1">Multi-pass membrane protein</topology>
    </subcellularLocation>
</comment>
<comment type="similarity">
    <text evidence="1">Belongs to the CN hydrolase family. Apolipoprotein N-acyltransferase subfamily.</text>
</comment>
<protein>
    <recommendedName>
        <fullName evidence="1">Apolipoprotein N-acyltransferase 2</fullName>
        <shortName evidence="1">ALP N-acyltransferase 2</shortName>
        <ecNumber evidence="1">2.3.1.269</ecNumber>
    </recommendedName>
</protein>
<reference key="1">
    <citation type="journal article" date="1998" name="Science">
        <title>Complete genome sequence of Treponema pallidum, the syphilis spirochete.</title>
        <authorList>
            <person name="Fraser C.M."/>
            <person name="Norris S.J."/>
            <person name="Weinstock G.M."/>
            <person name="White O."/>
            <person name="Sutton G.G."/>
            <person name="Dodson R.J."/>
            <person name="Gwinn M.L."/>
            <person name="Hickey E.K."/>
            <person name="Clayton R.A."/>
            <person name="Ketchum K.A."/>
            <person name="Sodergren E."/>
            <person name="Hardham J.M."/>
            <person name="McLeod M.P."/>
            <person name="Salzberg S.L."/>
            <person name="Peterson J.D."/>
            <person name="Khalak H.G."/>
            <person name="Richardson D.L."/>
            <person name="Howell J.K."/>
            <person name="Chidambaram M."/>
            <person name="Utterback T.R."/>
            <person name="McDonald L.A."/>
            <person name="Artiach P."/>
            <person name="Bowman C."/>
            <person name="Cotton M.D."/>
            <person name="Fujii C."/>
            <person name="Garland S.A."/>
            <person name="Hatch B."/>
            <person name="Horst K."/>
            <person name="Roberts K.M."/>
            <person name="Sandusky M."/>
            <person name="Weidman J.F."/>
            <person name="Smith H.O."/>
            <person name="Venter J.C."/>
        </authorList>
    </citation>
    <scope>NUCLEOTIDE SEQUENCE [LARGE SCALE GENOMIC DNA]</scope>
    <source>
        <strain>Nichols</strain>
    </source>
</reference>
<gene>
    <name evidence="1" type="primary">lnt2</name>
    <name type="ordered locus">TP_0417</name>
</gene>